<feature type="chain" id="PRO_1000052774" description="Large ribosomal subunit protein uL5">
    <location>
        <begin position="1"/>
        <end position="181"/>
    </location>
</feature>
<comment type="function">
    <text evidence="1">This is one of the proteins that bind and probably mediate the attachment of the 5S RNA into the large ribosomal subunit, where it forms part of the central protuberance. In the 70S ribosome it contacts protein S13 of the 30S subunit (bridge B1b), connecting the 2 subunits; this bridge is implicated in subunit movement. May contact the P site tRNA; the 5S rRNA and some of its associated proteins might help stabilize positioning of ribosome-bound tRNAs.</text>
</comment>
<comment type="subunit">
    <text evidence="1">Part of the 50S ribosomal subunit; contacts the 5S rRNA and probably tRNA. Forms a bridge to the 30S subunit in the 70S ribosome.</text>
</comment>
<comment type="similarity">
    <text evidence="1">Belongs to the universal ribosomal protein uL5 family.</text>
</comment>
<organism>
    <name type="scientific">Methanococcus vannielii (strain ATCC 35089 / DSM 1224 / JCM 13029 / OCM 148 / SB)</name>
    <dbReference type="NCBI Taxonomy" id="406327"/>
    <lineage>
        <taxon>Archaea</taxon>
        <taxon>Methanobacteriati</taxon>
        <taxon>Methanobacteriota</taxon>
        <taxon>Methanomada group</taxon>
        <taxon>Methanococci</taxon>
        <taxon>Methanococcales</taxon>
        <taxon>Methanococcaceae</taxon>
        <taxon>Methanococcus</taxon>
    </lineage>
</organism>
<accession>A6UQ57</accession>
<dbReference type="EMBL" id="CP000742">
    <property type="protein sequence ID" value="ABR54629.1"/>
    <property type="molecule type" value="Genomic_DNA"/>
</dbReference>
<dbReference type="RefSeq" id="WP_011972531.1">
    <property type="nucleotide sequence ID" value="NC_009634.1"/>
</dbReference>
<dbReference type="SMR" id="A6UQ57"/>
<dbReference type="STRING" id="406327.Mevan_0723"/>
<dbReference type="GeneID" id="5326050"/>
<dbReference type="KEGG" id="mvn:Mevan_0723"/>
<dbReference type="eggNOG" id="arCOG04092">
    <property type="taxonomic scope" value="Archaea"/>
</dbReference>
<dbReference type="HOGENOM" id="CLU_061015_3_0_2"/>
<dbReference type="OrthoDB" id="372044at2157"/>
<dbReference type="Proteomes" id="UP000001107">
    <property type="component" value="Chromosome"/>
</dbReference>
<dbReference type="GO" id="GO:1990904">
    <property type="term" value="C:ribonucleoprotein complex"/>
    <property type="evidence" value="ECO:0007669"/>
    <property type="project" value="UniProtKB-KW"/>
</dbReference>
<dbReference type="GO" id="GO:0005840">
    <property type="term" value="C:ribosome"/>
    <property type="evidence" value="ECO:0007669"/>
    <property type="project" value="UniProtKB-KW"/>
</dbReference>
<dbReference type="GO" id="GO:0019843">
    <property type="term" value="F:rRNA binding"/>
    <property type="evidence" value="ECO:0007669"/>
    <property type="project" value="UniProtKB-UniRule"/>
</dbReference>
<dbReference type="GO" id="GO:0003735">
    <property type="term" value="F:structural constituent of ribosome"/>
    <property type="evidence" value="ECO:0007669"/>
    <property type="project" value="InterPro"/>
</dbReference>
<dbReference type="GO" id="GO:0000049">
    <property type="term" value="F:tRNA binding"/>
    <property type="evidence" value="ECO:0007669"/>
    <property type="project" value="UniProtKB-UniRule"/>
</dbReference>
<dbReference type="GO" id="GO:0006412">
    <property type="term" value="P:translation"/>
    <property type="evidence" value="ECO:0007669"/>
    <property type="project" value="UniProtKB-UniRule"/>
</dbReference>
<dbReference type="FunFam" id="3.30.1440.10:FF:000002">
    <property type="entry name" value="60S ribosomal protein L11"/>
    <property type="match status" value="1"/>
</dbReference>
<dbReference type="Gene3D" id="3.30.1440.10">
    <property type="match status" value="1"/>
</dbReference>
<dbReference type="HAMAP" id="MF_01333_A">
    <property type="entry name" value="Ribosomal_uL5_A"/>
    <property type="match status" value="1"/>
</dbReference>
<dbReference type="InterPro" id="IPR002132">
    <property type="entry name" value="Ribosomal_uL5"/>
</dbReference>
<dbReference type="InterPro" id="IPR022804">
    <property type="entry name" value="Ribosomal_uL5_arc"/>
</dbReference>
<dbReference type="InterPro" id="IPR031309">
    <property type="entry name" value="Ribosomal_uL5_C"/>
</dbReference>
<dbReference type="InterPro" id="IPR020929">
    <property type="entry name" value="Ribosomal_uL5_CS"/>
</dbReference>
<dbReference type="InterPro" id="IPR022803">
    <property type="entry name" value="Ribosomal_uL5_dom_sf"/>
</dbReference>
<dbReference type="InterPro" id="IPR031310">
    <property type="entry name" value="Ribosomal_uL5_N"/>
</dbReference>
<dbReference type="NCBIfam" id="NF003258">
    <property type="entry name" value="PRK04219.1"/>
    <property type="match status" value="1"/>
</dbReference>
<dbReference type="PANTHER" id="PTHR11994">
    <property type="entry name" value="60S RIBOSOMAL PROTEIN L11-RELATED"/>
    <property type="match status" value="1"/>
</dbReference>
<dbReference type="Pfam" id="PF00281">
    <property type="entry name" value="Ribosomal_L5"/>
    <property type="match status" value="1"/>
</dbReference>
<dbReference type="Pfam" id="PF00673">
    <property type="entry name" value="Ribosomal_L5_C"/>
    <property type="match status" value="1"/>
</dbReference>
<dbReference type="PIRSF" id="PIRSF002161">
    <property type="entry name" value="Ribosomal_L5"/>
    <property type="match status" value="1"/>
</dbReference>
<dbReference type="SUPFAM" id="SSF55282">
    <property type="entry name" value="RL5-like"/>
    <property type="match status" value="1"/>
</dbReference>
<dbReference type="PROSITE" id="PS00358">
    <property type="entry name" value="RIBOSOMAL_L5"/>
    <property type="match status" value="1"/>
</dbReference>
<proteinExistence type="inferred from homology"/>
<name>RL5_METVS</name>
<gene>
    <name evidence="1" type="primary">rpl5</name>
    <name type="ordered locus">Mevan_0723</name>
</gene>
<sequence length="181" mass="20293">MSFQEVWEKEPMKKPRIQKVTVNFGVGEAGDRLTIGAKVIETLTGQAPVRTLAKQTNPAFGIRKKLPIGLKVTLRGKNAEEFLENAFVAFKVSGKVLYASSFDKVGNFSFGVPEHIDFPGQKYDPTVGIYGMDICVTFEKPGYRVKSRKLKRSHIPAKHLVKKEEAIEYIEKKFGAEVVME</sequence>
<protein>
    <recommendedName>
        <fullName evidence="1">Large ribosomal subunit protein uL5</fullName>
    </recommendedName>
    <alternativeName>
        <fullName evidence="2">50S ribosomal protein L5</fullName>
    </alternativeName>
</protein>
<reference key="1">
    <citation type="submission" date="2007-06" db="EMBL/GenBank/DDBJ databases">
        <title>Complete sequence of Methanococcus vannielii SB.</title>
        <authorList>
            <consortium name="US DOE Joint Genome Institute"/>
            <person name="Copeland A."/>
            <person name="Lucas S."/>
            <person name="Lapidus A."/>
            <person name="Barry K."/>
            <person name="Glavina del Rio T."/>
            <person name="Dalin E."/>
            <person name="Tice H."/>
            <person name="Pitluck S."/>
            <person name="Chain P."/>
            <person name="Malfatti S."/>
            <person name="Shin M."/>
            <person name="Vergez L."/>
            <person name="Schmutz J."/>
            <person name="Larimer F."/>
            <person name="Land M."/>
            <person name="Hauser L."/>
            <person name="Kyrpides N."/>
            <person name="Anderson I."/>
            <person name="Sieprawska-Lupa M."/>
            <person name="Whitman W.B."/>
            <person name="Richardson P."/>
        </authorList>
    </citation>
    <scope>NUCLEOTIDE SEQUENCE [LARGE SCALE GENOMIC DNA]</scope>
    <source>
        <strain>ATCC 35089 / DSM 1224 / JCM 13029 / OCM 148 / SB</strain>
    </source>
</reference>
<evidence type="ECO:0000255" key="1">
    <source>
        <dbReference type="HAMAP-Rule" id="MF_01333"/>
    </source>
</evidence>
<evidence type="ECO:0000305" key="2"/>
<keyword id="KW-0687">Ribonucleoprotein</keyword>
<keyword id="KW-0689">Ribosomal protein</keyword>
<keyword id="KW-0694">RNA-binding</keyword>
<keyword id="KW-0699">rRNA-binding</keyword>
<keyword id="KW-0820">tRNA-binding</keyword>